<keyword id="KW-0256">Endoplasmic reticulum</keyword>
<keyword id="KW-0443">Lipid metabolism</keyword>
<keyword id="KW-0472">Membrane</keyword>
<keyword id="KW-0492">Microsome</keyword>
<keyword id="KW-0521">NADP</keyword>
<keyword id="KW-0560">Oxidoreductase</keyword>
<keyword id="KW-1267">Proteomics identification</keyword>
<keyword id="KW-1185">Reference proteome</keyword>
<keyword id="KW-0735">Signal-anchor</keyword>
<keyword id="KW-0812">Transmembrane</keyword>
<keyword id="KW-1133">Transmembrane helix</keyword>
<dbReference type="EC" id="1.1.1.300"/>
<dbReference type="EMBL" id="AF456765">
    <property type="protein sequence ID" value="AAN64747.1"/>
    <property type="molecule type" value="mRNA"/>
</dbReference>
<dbReference type="EMBL" id="AY358270">
    <property type="protein sequence ID" value="AAQ88637.1"/>
    <property type="molecule type" value="mRNA"/>
</dbReference>
<dbReference type="EMBL" id="BC067131">
    <property type="protein sequence ID" value="AAH67131.1"/>
    <property type="molecule type" value="mRNA"/>
</dbReference>
<dbReference type="CCDS" id="CCDS6213.1"/>
<dbReference type="RefSeq" id="NP_742034.1">
    <property type="nucleotide sequence ID" value="NM_172037.5"/>
</dbReference>
<dbReference type="SMR" id="Q8IZV5"/>
<dbReference type="BioGRID" id="127600">
    <property type="interactions" value="52"/>
</dbReference>
<dbReference type="FunCoup" id="Q8IZV5">
    <property type="interactions" value="590"/>
</dbReference>
<dbReference type="IntAct" id="Q8IZV5">
    <property type="interactions" value="8"/>
</dbReference>
<dbReference type="MINT" id="Q8IZV5"/>
<dbReference type="STRING" id="9606.ENSP00000240285"/>
<dbReference type="SwissLipids" id="SLP:000001866"/>
<dbReference type="GlyGen" id="Q8IZV5">
    <property type="glycosylation" value="1 site, 1 O-linked glycan (1 site)"/>
</dbReference>
<dbReference type="iPTMnet" id="Q8IZV5"/>
<dbReference type="PhosphoSitePlus" id="Q8IZV5"/>
<dbReference type="SwissPalm" id="Q8IZV5"/>
<dbReference type="BioMuta" id="RDH10"/>
<dbReference type="DMDM" id="74750799"/>
<dbReference type="jPOST" id="Q8IZV5"/>
<dbReference type="MassIVE" id="Q8IZV5"/>
<dbReference type="PaxDb" id="9606-ENSP00000240285"/>
<dbReference type="PeptideAtlas" id="Q8IZV5"/>
<dbReference type="ProteomicsDB" id="71436"/>
<dbReference type="Pumba" id="Q8IZV5"/>
<dbReference type="Antibodypedia" id="42541">
    <property type="antibodies" value="147 antibodies from 24 providers"/>
</dbReference>
<dbReference type="DNASU" id="157506"/>
<dbReference type="Ensembl" id="ENST00000240285.10">
    <property type="protein sequence ID" value="ENSP00000240285.5"/>
    <property type="gene ID" value="ENSG00000121039.10"/>
</dbReference>
<dbReference type="GeneID" id="157506"/>
<dbReference type="KEGG" id="hsa:157506"/>
<dbReference type="MANE-Select" id="ENST00000240285.10">
    <property type="protein sequence ID" value="ENSP00000240285.5"/>
    <property type="RefSeq nucleotide sequence ID" value="NM_172037.5"/>
    <property type="RefSeq protein sequence ID" value="NP_742034.1"/>
</dbReference>
<dbReference type="UCSC" id="uc003xzi.4">
    <property type="organism name" value="human"/>
</dbReference>
<dbReference type="AGR" id="HGNC:19975"/>
<dbReference type="CTD" id="157506"/>
<dbReference type="DisGeNET" id="157506"/>
<dbReference type="GeneCards" id="RDH10"/>
<dbReference type="HGNC" id="HGNC:19975">
    <property type="gene designation" value="RDH10"/>
</dbReference>
<dbReference type="HPA" id="ENSG00000121039">
    <property type="expression patterns" value="Low tissue specificity"/>
</dbReference>
<dbReference type="MIM" id="607599">
    <property type="type" value="gene"/>
</dbReference>
<dbReference type="neXtProt" id="NX_Q8IZV5"/>
<dbReference type="OpenTargets" id="ENSG00000121039"/>
<dbReference type="PharmGKB" id="PA134989620"/>
<dbReference type="VEuPathDB" id="HostDB:ENSG00000121039"/>
<dbReference type="eggNOG" id="KOG1201">
    <property type="taxonomic scope" value="Eukaryota"/>
</dbReference>
<dbReference type="GeneTree" id="ENSGT00940000157063"/>
<dbReference type="HOGENOM" id="CLU_010194_2_5_1"/>
<dbReference type="InParanoid" id="Q8IZV5"/>
<dbReference type="OMA" id="KQAMNNN"/>
<dbReference type="OrthoDB" id="5840532at2759"/>
<dbReference type="PAN-GO" id="Q8IZV5">
    <property type="GO annotations" value="2 GO annotations based on evolutionary models"/>
</dbReference>
<dbReference type="PhylomeDB" id="Q8IZV5"/>
<dbReference type="TreeFam" id="TF312837"/>
<dbReference type="BioCyc" id="MetaCyc:ENSG00000121039-MONOMER"/>
<dbReference type="BRENDA" id="1.1.1.105">
    <property type="organism ID" value="2681"/>
</dbReference>
<dbReference type="BRENDA" id="1.1.1.300">
    <property type="organism ID" value="2681"/>
</dbReference>
<dbReference type="BRENDA" id="1.1.1.315">
    <property type="organism ID" value="2681"/>
</dbReference>
<dbReference type="PathwayCommons" id="Q8IZV5"/>
<dbReference type="Reactome" id="R-HSA-2453902">
    <property type="pathway name" value="The canonical retinoid cycle in rods (twilight vision)"/>
</dbReference>
<dbReference type="Reactome" id="R-HSA-5365859">
    <property type="pathway name" value="RA biosynthesis pathway"/>
</dbReference>
<dbReference type="SignaLink" id="Q8IZV5"/>
<dbReference type="SIGNOR" id="Q8IZV5"/>
<dbReference type="UniPathway" id="UPA00912"/>
<dbReference type="BioGRID-ORCS" id="157506">
    <property type="hits" value="15 hits in 1165 CRISPR screens"/>
</dbReference>
<dbReference type="ChiTaRS" id="RDH10">
    <property type="organism name" value="human"/>
</dbReference>
<dbReference type="GenomeRNAi" id="157506"/>
<dbReference type="Pharos" id="Q8IZV5">
    <property type="development level" value="Tbio"/>
</dbReference>
<dbReference type="PRO" id="PR:Q8IZV5"/>
<dbReference type="Proteomes" id="UP000005640">
    <property type="component" value="Chromosome 8"/>
</dbReference>
<dbReference type="RNAct" id="Q8IZV5">
    <property type="molecule type" value="protein"/>
</dbReference>
<dbReference type="Bgee" id="ENSG00000121039">
    <property type="expression patterns" value="Expressed in nasal cavity epithelium and 174 other cell types or tissues"/>
</dbReference>
<dbReference type="ExpressionAtlas" id="Q8IZV5">
    <property type="expression patterns" value="baseline and differential"/>
</dbReference>
<dbReference type="GO" id="GO:0005737">
    <property type="term" value="C:cytoplasm"/>
    <property type="evidence" value="ECO:0000314"/>
    <property type="project" value="UniProtKB"/>
</dbReference>
<dbReference type="GO" id="GO:0005789">
    <property type="term" value="C:endoplasmic reticulum membrane"/>
    <property type="evidence" value="ECO:0000304"/>
    <property type="project" value="Reactome"/>
</dbReference>
<dbReference type="GO" id="GO:0005811">
    <property type="term" value="C:lipid droplet"/>
    <property type="evidence" value="ECO:0000318"/>
    <property type="project" value="GO_Central"/>
</dbReference>
<dbReference type="GO" id="GO:0016020">
    <property type="term" value="C:membrane"/>
    <property type="evidence" value="ECO:0000314"/>
    <property type="project" value="UniProtKB"/>
</dbReference>
<dbReference type="GO" id="GO:0004745">
    <property type="term" value="F:all-trans-retinol dehydrogenase (NAD+) activity"/>
    <property type="evidence" value="ECO:0000314"/>
    <property type="project" value="UniProtKB"/>
</dbReference>
<dbReference type="GO" id="GO:0052650">
    <property type="term" value="F:all-trans-retinol dehydrogenase (NADP+) activity"/>
    <property type="evidence" value="ECO:0000304"/>
    <property type="project" value="Reactome"/>
</dbReference>
<dbReference type="GO" id="GO:0016616">
    <property type="term" value="F:oxidoreductase activity, acting on the CH-OH group of donors, NAD or NADP as acceptor"/>
    <property type="evidence" value="ECO:0000318"/>
    <property type="project" value="GO_Central"/>
</dbReference>
<dbReference type="GO" id="GO:0060449">
    <property type="term" value="P:bud elongation involved in lung branching"/>
    <property type="evidence" value="ECO:0007669"/>
    <property type="project" value="Ensembl"/>
</dbReference>
<dbReference type="GO" id="GO:0043583">
    <property type="term" value="P:ear development"/>
    <property type="evidence" value="ECO:0007669"/>
    <property type="project" value="Ensembl"/>
</dbReference>
<dbReference type="GO" id="GO:0031076">
    <property type="term" value="P:embryonic camera-type eye development"/>
    <property type="evidence" value="ECO:0007669"/>
    <property type="project" value="Ensembl"/>
</dbReference>
<dbReference type="GO" id="GO:0035115">
    <property type="term" value="P:embryonic forelimb morphogenesis"/>
    <property type="evidence" value="ECO:0007669"/>
    <property type="project" value="Ensembl"/>
</dbReference>
<dbReference type="GO" id="GO:0048703">
    <property type="term" value="P:embryonic viscerocranium morphogenesis"/>
    <property type="evidence" value="ECO:0007669"/>
    <property type="project" value="Ensembl"/>
</dbReference>
<dbReference type="GO" id="GO:0008406">
    <property type="term" value="P:gonad development"/>
    <property type="evidence" value="ECO:0007669"/>
    <property type="project" value="Ensembl"/>
</dbReference>
<dbReference type="GO" id="GO:0001701">
    <property type="term" value="P:in utero embryonic development"/>
    <property type="evidence" value="ECO:0007669"/>
    <property type="project" value="Ensembl"/>
</dbReference>
<dbReference type="GO" id="GO:0001656">
    <property type="term" value="P:metanephros development"/>
    <property type="evidence" value="ECO:0007669"/>
    <property type="project" value="Ensembl"/>
</dbReference>
<dbReference type="GO" id="GO:0014032">
    <property type="term" value="P:neural crest cell development"/>
    <property type="evidence" value="ECO:0007669"/>
    <property type="project" value="Ensembl"/>
</dbReference>
<dbReference type="GO" id="GO:0043584">
    <property type="term" value="P:nose development"/>
    <property type="evidence" value="ECO:0007669"/>
    <property type="project" value="Ensembl"/>
</dbReference>
<dbReference type="GO" id="GO:1900054">
    <property type="term" value="P:positive regulation of retinoic acid biosynthetic process"/>
    <property type="evidence" value="ECO:0007669"/>
    <property type="project" value="Ensembl"/>
</dbReference>
<dbReference type="GO" id="GO:0060431">
    <property type="term" value="P:primary lung bud formation"/>
    <property type="evidence" value="ECO:0007669"/>
    <property type="project" value="Ensembl"/>
</dbReference>
<dbReference type="GO" id="GO:0042574">
    <property type="term" value="P:retinal metabolic process"/>
    <property type="evidence" value="ECO:0000314"/>
    <property type="project" value="UniProtKB"/>
</dbReference>
<dbReference type="GO" id="GO:0002138">
    <property type="term" value="P:retinoic acid biosynthetic process"/>
    <property type="evidence" value="ECO:0007669"/>
    <property type="project" value="Ensembl"/>
</dbReference>
<dbReference type="GO" id="GO:0001523">
    <property type="term" value="P:retinoid metabolic process"/>
    <property type="evidence" value="ECO:0000304"/>
    <property type="project" value="Reactome"/>
</dbReference>
<dbReference type="GO" id="GO:0042572">
    <property type="term" value="P:retinol metabolic process"/>
    <property type="evidence" value="ECO:0000314"/>
    <property type="project" value="UniProtKB"/>
</dbReference>
<dbReference type="GO" id="GO:0007601">
    <property type="term" value="P:visual perception"/>
    <property type="evidence" value="ECO:0000314"/>
    <property type="project" value="MGI"/>
</dbReference>
<dbReference type="CDD" id="cd05339">
    <property type="entry name" value="17beta-HSDXI-like_SDR_c"/>
    <property type="match status" value="1"/>
</dbReference>
<dbReference type="FunFam" id="3.40.50.720:FF:000177">
    <property type="entry name" value="Retinol dehydrogenase 10"/>
    <property type="match status" value="1"/>
</dbReference>
<dbReference type="Gene3D" id="3.40.50.720">
    <property type="entry name" value="NAD(P)-binding Rossmann-like Domain"/>
    <property type="match status" value="1"/>
</dbReference>
<dbReference type="InterPro" id="IPR036291">
    <property type="entry name" value="NAD(P)-bd_dom_sf"/>
</dbReference>
<dbReference type="InterPro" id="IPR020904">
    <property type="entry name" value="Sc_DH/Rdtase_CS"/>
</dbReference>
<dbReference type="InterPro" id="IPR002347">
    <property type="entry name" value="SDR_fam"/>
</dbReference>
<dbReference type="PANTHER" id="PTHR24322">
    <property type="entry name" value="PKSB"/>
    <property type="match status" value="1"/>
</dbReference>
<dbReference type="PANTHER" id="PTHR24322:SF736">
    <property type="entry name" value="RETINOL DEHYDROGENASE 10"/>
    <property type="match status" value="1"/>
</dbReference>
<dbReference type="Pfam" id="PF00106">
    <property type="entry name" value="adh_short"/>
    <property type="match status" value="1"/>
</dbReference>
<dbReference type="PRINTS" id="PR00081">
    <property type="entry name" value="GDHRDH"/>
</dbReference>
<dbReference type="PRINTS" id="PR00080">
    <property type="entry name" value="SDRFAMILY"/>
</dbReference>
<dbReference type="SUPFAM" id="SSF51735">
    <property type="entry name" value="NAD(P)-binding Rossmann-fold domains"/>
    <property type="match status" value="1"/>
</dbReference>
<dbReference type="PROSITE" id="PS00061">
    <property type="entry name" value="ADH_SHORT"/>
    <property type="match status" value="1"/>
</dbReference>
<gene>
    <name type="primary">RDH10</name>
    <name type="synonym">SDR16C4</name>
    <name type="ORF">UNQ9375/PRO34191</name>
</gene>
<sequence>MNIVVEFFVVTFKVLWAFVLAAARWLVRPKEKSVAGQVCLITGAGSGLGRLFALEFARRRALLVLWDINTQSNEETAGMVRHIYRDLEAADAAALQAGNGEEEILPHCNLQVFTYTCDVGKRENVYLTAERVRKEVGEVSVLVNNAGVVSGHHLLECPDELIERTMMVNCHAHFWTTKAFLPTMLEINHGHIVTVASSLGLFSTAGVEDYCASKFGVVGFHESLSHELKAAEKDGIKTTLVCPYLVDTGMFRGCRIRKEIEPFLPPLKPDYCVKQAMKAILTDQPMICTPRLMYIVTFMKSILPFEAVVCMYRFLGADKCMYPFIAQRKQATNNNEAKNGI</sequence>
<organism>
    <name type="scientific">Homo sapiens</name>
    <name type="common">Human</name>
    <dbReference type="NCBI Taxonomy" id="9606"/>
    <lineage>
        <taxon>Eukaryota</taxon>
        <taxon>Metazoa</taxon>
        <taxon>Chordata</taxon>
        <taxon>Craniata</taxon>
        <taxon>Vertebrata</taxon>
        <taxon>Euteleostomi</taxon>
        <taxon>Mammalia</taxon>
        <taxon>Eutheria</taxon>
        <taxon>Euarchontoglires</taxon>
        <taxon>Primates</taxon>
        <taxon>Haplorrhini</taxon>
        <taxon>Catarrhini</taxon>
        <taxon>Hominidae</taxon>
        <taxon>Homo</taxon>
    </lineage>
</organism>
<accession>Q8IZV5</accession>
<protein>
    <recommendedName>
        <fullName>Retinol dehydrogenase 10</fullName>
        <ecNumber>1.1.1.300</ecNumber>
    </recommendedName>
    <alternativeName>
        <fullName>Short chain dehydrogenase/reductase family 16C member 4</fullName>
    </alternativeName>
</protein>
<proteinExistence type="evidence at protein level"/>
<evidence type="ECO:0000250" key="1"/>
<evidence type="ECO:0000255" key="2"/>
<evidence type="ECO:0000255" key="3">
    <source>
        <dbReference type="PROSITE-ProRule" id="PRU10001"/>
    </source>
</evidence>
<evidence type="ECO:0000269" key="4">
    <source>
    </source>
</evidence>
<evidence type="ECO:0000269" key="5">
    <source>
    </source>
</evidence>
<evidence type="ECO:0000305" key="6"/>
<name>RDH10_HUMAN</name>
<feature type="chain" id="PRO_0000307682" description="Retinol dehydrogenase 10">
    <location>
        <begin position="1"/>
        <end position="341"/>
    </location>
</feature>
<feature type="transmembrane region" description="Helical; Signal-anchor" evidence="2">
    <location>
        <begin position="3"/>
        <end position="23"/>
    </location>
</feature>
<feature type="active site" description="Proton acceptor" evidence="3">
    <location>
        <position position="210"/>
    </location>
</feature>
<feature type="binding site" evidence="1">
    <location>
        <begin position="40"/>
        <end position="64"/>
    </location>
    <ligand>
        <name>NADP(+)</name>
        <dbReference type="ChEBI" id="CHEBI:58349"/>
    </ligand>
</feature>
<feature type="binding site" evidence="1">
    <location>
        <position position="197"/>
    </location>
    <ligand>
        <name>substrate</name>
    </ligand>
</feature>
<comment type="function">
    <text evidence="4">Retinol dehydrogenase with a clear preference for NADP. Converts all-trans-retinol to all-trans-retinal. Has no detectable activity towards 11-cis-retinol, 9-cis-retinol and 13-cis-retinol.</text>
</comment>
<comment type="catalytic activity">
    <reaction evidence="4">
        <text>all-trans-retinol + NADP(+) = all-trans-retinal + NADPH + H(+)</text>
        <dbReference type="Rhea" id="RHEA:25033"/>
        <dbReference type="ChEBI" id="CHEBI:15378"/>
        <dbReference type="ChEBI" id="CHEBI:17336"/>
        <dbReference type="ChEBI" id="CHEBI:17898"/>
        <dbReference type="ChEBI" id="CHEBI:57783"/>
        <dbReference type="ChEBI" id="CHEBI:58349"/>
        <dbReference type="EC" id="1.1.1.300"/>
    </reaction>
</comment>
<comment type="pathway">
    <text>Cofactor metabolism; retinol metabolism.</text>
</comment>
<comment type="interaction">
    <interactant intactId="EBI-11913715">
        <id>Q8IZV5</id>
    </interactant>
    <interactant intactId="EBI-2876502">
        <id>Q96CM8</id>
        <label>ACSF2</label>
    </interactant>
    <organismsDiffer>false</organismsDiffer>
    <experiments>3</experiments>
</comment>
<comment type="interaction">
    <interactant intactId="EBI-11913715">
        <id>Q8IZV5</id>
    </interactant>
    <interactant intactId="EBI-2510241">
        <id>Q9BW61</id>
        <label>DDA1</label>
    </interactant>
    <organismsDiffer>false</organismsDiffer>
    <experiments>3</experiments>
</comment>
<comment type="interaction">
    <interactant intactId="EBI-11913715">
        <id>Q8IZV5</id>
    </interactant>
    <interactant intactId="EBI-9304251">
        <id>Q05329</id>
        <label>GAD2</label>
    </interactant>
    <organismsDiffer>false</organismsDiffer>
    <experiments>3</experiments>
</comment>
<comment type="interaction">
    <interactant intactId="EBI-11913715">
        <id>Q8IZV5</id>
    </interactant>
    <interactant intactId="EBI-2806908">
        <id>Q96LZ7</id>
        <label>RMDN2</label>
    </interactant>
    <organismsDiffer>false</organismsDiffer>
    <experiments>3</experiments>
</comment>
<comment type="subcellular location">
    <subcellularLocation>
        <location evidence="6">Microsome membrane</location>
        <topology evidence="6">Single-pass membrane protein</topology>
    </subcellularLocation>
    <subcellularLocation>
        <location evidence="6">Endoplasmic reticulum membrane</location>
        <topology evidence="6">Single-pass membrane protein</topology>
    </subcellularLocation>
</comment>
<comment type="tissue specificity">
    <text evidence="4 5">Detected in retina, kidney, liver, small intestine, placenta, lung, heart and skeletal muscle.</text>
</comment>
<comment type="similarity">
    <text evidence="6">Belongs to the short-chain dehydrogenases/reductases (SDR) family.</text>
</comment>
<reference key="1">
    <citation type="journal article" date="2002" name="Invest. Ophthalmol. Vis. Sci.">
        <title>Cloning and characterization of a novel all-trans retinol short-chain dehydrogenase/reductase from the RPE.</title>
        <authorList>
            <person name="Wu B.X."/>
            <person name="Chen Y."/>
            <person name="Chen Y."/>
            <person name="Fan J."/>
            <person name="Rohrer B."/>
            <person name="Crouch R.K."/>
            <person name="Ma J.-X."/>
        </authorList>
    </citation>
    <scope>NUCLEOTIDE SEQUENCE [MRNA]</scope>
    <scope>FUNCTION</scope>
    <scope>CATALYTIC ACTIVITY</scope>
    <scope>SUBCELLULAR LOCATION</scope>
    <scope>TISSUE SPECIFICITY</scope>
    <source>
        <tissue>Retina</tissue>
    </source>
</reference>
<reference key="2">
    <citation type="journal article" date="2003" name="Genome Res.">
        <title>The secreted protein discovery initiative (SPDI), a large-scale effort to identify novel human secreted and transmembrane proteins: a bioinformatics assessment.</title>
        <authorList>
            <person name="Clark H.F."/>
            <person name="Gurney A.L."/>
            <person name="Abaya E."/>
            <person name="Baker K."/>
            <person name="Baldwin D.T."/>
            <person name="Brush J."/>
            <person name="Chen J."/>
            <person name="Chow B."/>
            <person name="Chui C."/>
            <person name="Crowley C."/>
            <person name="Currell B."/>
            <person name="Deuel B."/>
            <person name="Dowd P."/>
            <person name="Eaton D."/>
            <person name="Foster J.S."/>
            <person name="Grimaldi C."/>
            <person name="Gu Q."/>
            <person name="Hass P.E."/>
            <person name="Heldens S."/>
            <person name="Huang A."/>
            <person name="Kim H.S."/>
            <person name="Klimowski L."/>
            <person name="Jin Y."/>
            <person name="Johnson S."/>
            <person name="Lee J."/>
            <person name="Lewis L."/>
            <person name="Liao D."/>
            <person name="Mark M.R."/>
            <person name="Robbie E."/>
            <person name="Sanchez C."/>
            <person name="Schoenfeld J."/>
            <person name="Seshagiri S."/>
            <person name="Simmons L."/>
            <person name="Singh J."/>
            <person name="Smith V."/>
            <person name="Stinson J."/>
            <person name="Vagts A."/>
            <person name="Vandlen R.L."/>
            <person name="Watanabe C."/>
            <person name="Wieand D."/>
            <person name="Woods K."/>
            <person name="Xie M.-H."/>
            <person name="Yansura D.G."/>
            <person name="Yi S."/>
            <person name="Yu G."/>
            <person name="Yuan J."/>
            <person name="Zhang M."/>
            <person name="Zhang Z."/>
            <person name="Goddard A.D."/>
            <person name="Wood W.I."/>
            <person name="Godowski P.J."/>
            <person name="Gray A.M."/>
        </authorList>
    </citation>
    <scope>NUCLEOTIDE SEQUENCE [LARGE SCALE MRNA]</scope>
</reference>
<reference key="3">
    <citation type="journal article" date="2004" name="Genome Res.">
        <title>The status, quality, and expansion of the NIH full-length cDNA project: the Mammalian Gene Collection (MGC).</title>
        <authorList>
            <consortium name="The MGC Project Team"/>
        </authorList>
    </citation>
    <scope>NUCLEOTIDE SEQUENCE [LARGE SCALE MRNA]</scope>
    <source>
        <tissue>Eye</tissue>
    </source>
</reference>
<reference key="4">
    <citation type="journal article" date="2003" name="FEBS Lett.">
        <title>Genomic organization and transcription of the human retinol dehydrogenase 10 (RDH10) gene.</title>
        <authorList>
            <person name="Picozzi P."/>
            <person name="Marozzi A."/>
            <person name="Fornasari D."/>
            <person name="Benfante R."/>
            <person name="Barisani D."/>
            <person name="Meneveri R."/>
            <person name="Ginelli E."/>
        </authorList>
    </citation>
    <scope>TISSUE SPECIFICITY</scope>
</reference>